<dbReference type="EC" id="3.1.26.4" evidence="1"/>
<dbReference type="EMBL" id="AM286415">
    <property type="protein sequence ID" value="CAL11022.1"/>
    <property type="molecule type" value="Genomic_DNA"/>
</dbReference>
<dbReference type="RefSeq" id="WP_005173045.1">
    <property type="nucleotide sequence ID" value="NC_008800.1"/>
</dbReference>
<dbReference type="RefSeq" id="YP_001005259.1">
    <property type="nucleotide sequence ID" value="NC_008800.1"/>
</dbReference>
<dbReference type="SMR" id="A1JKB1"/>
<dbReference type="KEGG" id="yen:YE0921"/>
<dbReference type="PATRIC" id="fig|393305.7.peg.1020"/>
<dbReference type="eggNOG" id="COG0328">
    <property type="taxonomic scope" value="Bacteria"/>
</dbReference>
<dbReference type="HOGENOM" id="CLU_030894_6_0_6"/>
<dbReference type="OrthoDB" id="7845843at2"/>
<dbReference type="Proteomes" id="UP000000642">
    <property type="component" value="Chromosome"/>
</dbReference>
<dbReference type="GO" id="GO:0005737">
    <property type="term" value="C:cytoplasm"/>
    <property type="evidence" value="ECO:0007669"/>
    <property type="project" value="UniProtKB-SubCell"/>
</dbReference>
<dbReference type="GO" id="GO:0000287">
    <property type="term" value="F:magnesium ion binding"/>
    <property type="evidence" value="ECO:0007669"/>
    <property type="project" value="UniProtKB-UniRule"/>
</dbReference>
<dbReference type="GO" id="GO:0003676">
    <property type="term" value="F:nucleic acid binding"/>
    <property type="evidence" value="ECO:0007669"/>
    <property type="project" value="InterPro"/>
</dbReference>
<dbReference type="GO" id="GO:0004523">
    <property type="term" value="F:RNA-DNA hybrid ribonuclease activity"/>
    <property type="evidence" value="ECO:0007669"/>
    <property type="project" value="UniProtKB-UniRule"/>
</dbReference>
<dbReference type="GO" id="GO:0043137">
    <property type="term" value="P:DNA replication, removal of RNA primer"/>
    <property type="evidence" value="ECO:0007669"/>
    <property type="project" value="TreeGrafter"/>
</dbReference>
<dbReference type="CDD" id="cd09278">
    <property type="entry name" value="RNase_HI_prokaryote_like"/>
    <property type="match status" value="1"/>
</dbReference>
<dbReference type="FunFam" id="3.30.420.10:FF:000008">
    <property type="entry name" value="Ribonuclease H"/>
    <property type="match status" value="1"/>
</dbReference>
<dbReference type="Gene3D" id="3.30.420.10">
    <property type="entry name" value="Ribonuclease H-like superfamily/Ribonuclease H"/>
    <property type="match status" value="1"/>
</dbReference>
<dbReference type="HAMAP" id="MF_00042">
    <property type="entry name" value="RNase_H"/>
    <property type="match status" value="1"/>
</dbReference>
<dbReference type="InterPro" id="IPR050092">
    <property type="entry name" value="RNase_H"/>
</dbReference>
<dbReference type="InterPro" id="IPR012337">
    <property type="entry name" value="RNaseH-like_sf"/>
</dbReference>
<dbReference type="InterPro" id="IPR002156">
    <property type="entry name" value="RNaseH_domain"/>
</dbReference>
<dbReference type="InterPro" id="IPR036397">
    <property type="entry name" value="RNaseH_sf"/>
</dbReference>
<dbReference type="InterPro" id="IPR022892">
    <property type="entry name" value="RNaseHI"/>
</dbReference>
<dbReference type="NCBIfam" id="NF001236">
    <property type="entry name" value="PRK00203.1"/>
    <property type="match status" value="1"/>
</dbReference>
<dbReference type="PANTHER" id="PTHR10642">
    <property type="entry name" value="RIBONUCLEASE H1"/>
    <property type="match status" value="1"/>
</dbReference>
<dbReference type="PANTHER" id="PTHR10642:SF26">
    <property type="entry name" value="RIBONUCLEASE H1"/>
    <property type="match status" value="1"/>
</dbReference>
<dbReference type="Pfam" id="PF00075">
    <property type="entry name" value="RNase_H"/>
    <property type="match status" value="1"/>
</dbReference>
<dbReference type="SUPFAM" id="SSF53098">
    <property type="entry name" value="Ribonuclease H-like"/>
    <property type="match status" value="1"/>
</dbReference>
<dbReference type="PROSITE" id="PS50879">
    <property type="entry name" value="RNASE_H_1"/>
    <property type="match status" value="1"/>
</dbReference>
<feature type="chain" id="PRO_1000074684" description="Ribonuclease H">
    <location>
        <begin position="1"/>
        <end position="154"/>
    </location>
</feature>
<feature type="domain" description="RNase H type-1" evidence="2">
    <location>
        <begin position="1"/>
        <end position="142"/>
    </location>
</feature>
<feature type="binding site" evidence="1">
    <location>
        <position position="10"/>
    </location>
    <ligand>
        <name>Mg(2+)</name>
        <dbReference type="ChEBI" id="CHEBI:18420"/>
        <label>1</label>
    </ligand>
</feature>
<feature type="binding site" evidence="1">
    <location>
        <position position="10"/>
    </location>
    <ligand>
        <name>Mg(2+)</name>
        <dbReference type="ChEBI" id="CHEBI:18420"/>
        <label>2</label>
    </ligand>
</feature>
<feature type="binding site" evidence="1">
    <location>
        <position position="48"/>
    </location>
    <ligand>
        <name>Mg(2+)</name>
        <dbReference type="ChEBI" id="CHEBI:18420"/>
        <label>1</label>
    </ligand>
</feature>
<feature type="binding site" evidence="1">
    <location>
        <position position="70"/>
    </location>
    <ligand>
        <name>Mg(2+)</name>
        <dbReference type="ChEBI" id="CHEBI:18420"/>
        <label>1</label>
    </ligand>
</feature>
<feature type="binding site" evidence="1">
    <location>
        <position position="134"/>
    </location>
    <ligand>
        <name>Mg(2+)</name>
        <dbReference type="ChEBI" id="CHEBI:18420"/>
        <label>2</label>
    </ligand>
</feature>
<gene>
    <name evidence="1" type="primary">rnhA</name>
    <name type="ordered locus">YE0921</name>
</gene>
<accession>A1JKB1</accession>
<name>RNH_YERE8</name>
<proteinExistence type="inferred from homology"/>
<protein>
    <recommendedName>
        <fullName evidence="1">Ribonuclease H</fullName>
        <shortName evidence="1">RNase H</shortName>
        <ecNumber evidence="1">3.1.26.4</ecNumber>
    </recommendedName>
</protein>
<organism>
    <name type="scientific">Yersinia enterocolitica serotype O:8 / biotype 1B (strain NCTC 13174 / 8081)</name>
    <dbReference type="NCBI Taxonomy" id="393305"/>
    <lineage>
        <taxon>Bacteria</taxon>
        <taxon>Pseudomonadati</taxon>
        <taxon>Pseudomonadota</taxon>
        <taxon>Gammaproteobacteria</taxon>
        <taxon>Enterobacterales</taxon>
        <taxon>Yersiniaceae</taxon>
        <taxon>Yersinia</taxon>
    </lineage>
</organism>
<sequence length="154" mass="17505">MTKQVEIFTDGSCLGNPGPGGYGAILRYKQHEKTFSAGYFLTTNNRMELMAAIVALEALTSPCEVTLSTDSQYVRQGITQWIHNWKKRGWKTTDRKPVRNVDLWQRLDLAIQTHVIQWEWVKGHAGHPENERCDELAREGANSPTLEDTGYNPD</sequence>
<keyword id="KW-0963">Cytoplasm</keyword>
<keyword id="KW-0255">Endonuclease</keyword>
<keyword id="KW-0378">Hydrolase</keyword>
<keyword id="KW-0460">Magnesium</keyword>
<keyword id="KW-0479">Metal-binding</keyword>
<keyword id="KW-0540">Nuclease</keyword>
<comment type="function">
    <text evidence="1">Endonuclease that specifically degrades the RNA of RNA-DNA hybrids.</text>
</comment>
<comment type="catalytic activity">
    <reaction evidence="1">
        <text>Endonucleolytic cleavage to 5'-phosphomonoester.</text>
        <dbReference type="EC" id="3.1.26.4"/>
    </reaction>
</comment>
<comment type="cofactor">
    <cofactor evidence="1">
        <name>Mg(2+)</name>
        <dbReference type="ChEBI" id="CHEBI:18420"/>
    </cofactor>
    <text evidence="1">Binds 1 Mg(2+) ion per subunit. May bind a second metal ion at a regulatory site, or after substrate binding.</text>
</comment>
<comment type="subunit">
    <text evidence="1">Monomer.</text>
</comment>
<comment type="subcellular location">
    <subcellularLocation>
        <location evidence="1">Cytoplasm</location>
    </subcellularLocation>
</comment>
<comment type="similarity">
    <text evidence="1">Belongs to the RNase H family.</text>
</comment>
<reference key="1">
    <citation type="journal article" date="2006" name="PLoS Genet.">
        <title>The complete genome sequence and comparative genome analysis of the high pathogenicity Yersinia enterocolitica strain 8081.</title>
        <authorList>
            <person name="Thomson N.R."/>
            <person name="Howard S."/>
            <person name="Wren B.W."/>
            <person name="Holden M.T.G."/>
            <person name="Crossman L."/>
            <person name="Challis G.L."/>
            <person name="Churcher C."/>
            <person name="Mungall K."/>
            <person name="Brooks K."/>
            <person name="Chillingworth T."/>
            <person name="Feltwell T."/>
            <person name="Abdellah Z."/>
            <person name="Hauser H."/>
            <person name="Jagels K."/>
            <person name="Maddison M."/>
            <person name="Moule S."/>
            <person name="Sanders M."/>
            <person name="Whitehead S."/>
            <person name="Quail M.A."/>
            <person name="Dougan G."/>
            <person name="Parkhill J."/>
            <person name="Prentice M.B."/>
        </authorList>
    </citation>
    <scope>NUCLEOTIDE SEQUENCE [LARGE SCALE GENOMIC DNA]</scope>
    <source>
        <strain>NCTC 13174 / 8081</strain>
    </source>
</reference>
<evidence type="ECO:0000255" key="1">
    <source>
        <dbReference type="HAMAP-Rule" id="MF_00042"/>
    </source>
</evidence>
<evidence type="ECO:0000255" key="2">
    <source>
        <dbReference type="PROSITE-ProRule" id="PRU00408"/>
    </source>
</evidence>